<reference key="1">
    <citation type="submission" date="2007-03" db="EMBL/GenBank/DDBJ databases">
        <title>The NIAID influenza genome sequencing project.</title>
        <authorList>
            <person name="Ghedin E."/>
            <person name="Spiro D."/>
            <person name="Miller N."/>
            <person name="Zaborsky J."/>
            <person name="Feldblyum T."/>
            <person name="Subbu V."/>
            <person name="Shumway M."/>
            <person name="Sparenborg J."/>
            <person name="Groveman L."/>
            <person name="Halpin R."/>
            <person name="Sitz J."/>
            <person name="Koo H."/>
            <person name="Salzberg S.L."/>
            <person name="Webster R.G."/>
            <person name="Hoffmann E."/>
            <person name="Krauss S."/>
            <person name="Naeve C."/>
            <person name="Bao Y."/>
            <person name="Bolotov P."/>
            <person name="Dernovoy D."/>
            <person name="Kiryutin B."/>
            <person name="Lipman D.J."/>
            <person name="Tatusova T."/>
        </authorList>
    </citation>
    <scope>NUCLEOTIDE SEQUENCE [GENOMIC RNA]</scope>
</reference>
<reference key="2">
    <citation type="submission" date="2007-03" db="EMBL/GenBank/DDBJ databases">
        <authorList>
            <consortium name="The NIAID Influenza Genome Sequencing Consortium"/>
        </authorList>
    </citation>
    <scope>NUCLEOTIDE SEQUENCE [GENOMIC RNA]</scope>
</reference>
<evidence type="ECO:0000255" key="1">
    <source>
        <dbReference type="HAMAP-Rule" id="MF_04066"/>
    </source>
</evidence>
<evidence type="ECO:0000256" key="2">
    <source>
        <dbReference type="SAM" id="MobiDB-lite"/>
    </source>
</evidence>
<feature type="chain" id="PRO_0000372986" description="Non-structural protein 1">
    <location>
        <begin position="1"/>
        <end position="237"/>
    </location>
</feature>
<feature type="region of interest" description="RNA-binding and homodimerization" evidence="1">
    <location>
        <begin position="1"/>
        <end position="73"/>
    </location>
</feature>
<feature type="region of interest" description="CPSF4-binding" evidence="1">
    <location>
        <begin position="180"/>
        <end position="215"/>
    </location>
</feature>
<feature type="region of interest" description="Disordered" evidence="2">
    <location>
        <begin position="205"/>
        <end position="237"/>
    </location>
</feature>
<feature type="region of interest" description="PABPN1-binding" evidence="1">
    <location>
        <begin position="223"/>
        <end position="230"/>
    </location>
</feature>
<feature type="short sequence motif" description="Nuclear localization signal" evidence="1">
    <location>
        <begin position="34"/>
        <end position="38"/>
    </location>
</feature>
<feature type="short sequence motif" description="Nuclear export signal" evidence="1">
    <location>
        <begin position="137"/>
        <end position="146"/>
    </location>
</feature>
<feature type="compositionally biased region" description="Basic and acidic residues" evidence="2">
    <location>
        <begin position="226"/>
        <end position="237"/>
    </location>
</feature>
<dbReference type="EMBL" id="CY021057">
    <property type="protein sequence ID" value="ABO52285.1"/>
    <property type="molecule type" value="Viral_cRNA"/>
</dbReference>
<dbReference type="SMR" id="A4K149"/>
<dbReference type="Proteomes" id="UP000008219">
    <property type="component" value="Genome"/>
</dbReference>
<dbReference type="GO" id="GO:0030430">
    <property type="term" value="C:host cell cytoplasm"/>
    <property type="evidence" value="ECO:0007669"/>
    <property type="project" value="UniProtKB-SubCell"/>
</dbReference>
<dbReference type="GO" id="GO:0042025">
    <property type="term" value="C:host cell nucleus"/>
    <property type="evidence" value="ECO:0007669"/>
    <property type="project" value="UniProtKB-SubCell"/>
</dbReference>
<dbReference type="GO" id="GO:0030291">
    <property type="term" value="F:protein serine/threonine kinase inhibitor activity"/>
    <property type="evidence" value="ECO:0007669"/>
    <property type="project" value="UniProtKB-KW"/>
</dbReference>
<dbReference type="GO" id="GO:0003723">
    <property type="term" value="F:RNA binding"/>
    <property type="evidence" value="ECO:0007669"/>
    <property type="project" value="UniProtKB-KW"/>
</dbReference>
<dbReference type="GO" id="GO:0039540">
    <property type="term" value="P:symbiont-mediated suppression of host cytoplasmic pattern recognition receptor signaling pathway via inhibition of RIG-I activity"/>
    <property type="evidence" value="ECO:0007669"/>
    <property type="project" value="UniProtKB-KW"/>
</dbReference>
<dbReference type="GO" id="GO:0039657">
    <property type="term" value="P:symbiont-mediated suppression of host gene expression"/>
    <property type="evidence" value="ECO:0007669"/>
    <property type="project" value="UniProtKB-KW"/>
</dbReference>
<dbReference type="GO" id="GO:0039524">
    <property type="term" value="P:symbiont-mediated suppression of host mRNA processing"/>
    <property type="evidence" value="ECO:0007669"/>
    <property type="project" value="UniProtKB-KW"/>
</dbReference>
<dbReference type="GO" id="GO:0039580">
    <property type="term" value="P:symbiont-mediated suppression of host PKR/eIFalpha signaling"/>
    <property type="evidence" value="ECO:0007669"/>
    <property type="project" value="UniProtKB-KW"/>
</dbReference>
<dbReference type="GO" id="GO:0039502">
    <property type="term" value="P:symbiont-mediated suppression of host type I interferon-mediated signaling pathway"/>
    <property type="evidence" value="ECO:0007669"/>
    <property type="project" value="UniProtKB-KW"/>
</dbReference>
<dbReference type="FunFam" id="1.10.287.10:FF:000001">
    <property type="entry name" value="Non-structural protein 1"/>
    <property type="match status" value="1"/>
</dbReference>
<dbReference type="FunFam" id="3.30.420.330:FF:000001">
    <property type="entry name" value="Non-structural protein 1"/>
    <property type="match status" value="1"/>
</dbReference>
<dbReference type="Gene3D" id="3.30.420.330">
    <property type="entry name" value="Influenza virus non-structural protein, effector domain"/>
    <property type="match status" value="1"/>
</dbReference>
<dbReference type="Gene3D" id="1.10.287.10">
    <property type="entry name" value="S15/NS1, RNA-binding"/>
    <property type="match status" value="1"/>
</dbReference>
<dbReference type="HAMAP" id="MF_04066">
    <property type="entry name" value="INFV_NS1"/>
    <property type="match status" value="1"/>
</dbReference>
<dbReference type="InterPro" id="IPR004208">
    <property type="entry name" value="NS1"/>
</dbReference>
<dbReference type="InterPro" id="IPR000256">
    <property type="entry name" value="NS1A"/>
</dbReference>
<dbReference type="InterPro" id="IPR038064">
    <property type="entry name" value="NS1A_effect_dom-like_sf"/>
</dbReference>
<dbReference type="InterPro" id="IPR009068">
    <property type="entry name" value="uS15_NS1_RNA-bd_sf"/>
</dbReference>
<dbReference type="Pfam" id="PF00600">
    <property type="entry name" value="Flu_NS1"/>
    <property type="match status" value="1"/>
</dbReference>
<dbReference type="SUPFAM" id="SSF143021">
    <property type="entry name" value="Ns1 effector domain-like"/>
    <property type="match status" value="1"/>
</dbReference>
<dbReference type="SUPFAM" id="SSF47060">
    <property type="entry name" value="S15/NS1 RNA-binding domain"/>
    <property type="match status" value="1"/>
</dbReference>
<organismHost>
    <name type="scientific">Aves</name>
    <dbReference type="NCBI Taxonomy" id="8782"/>
</organismHost>
<organismHost>
    <name type="scientific">Homo sapiens</name>
    <name type="common">Human</name>
    <dbReference type="NCBI Taxonomy" id="9606"/>
</organismHost>
<organismHost>
    <name type="scientific">Sus scrofa</name>
    <name type="common">Pig</name>
    <dbReference type="NCBI Taxonomy" id="9823"/>
</organismHost>
<gene>
    <name evidence="1" type="primary">NS</name>
</gene>
<comment type="function">
    <text evidence="1">Inhibits post-transcriptional processing of cellular pre-mRNA, by binding and inhibiting two cellular proteins that are required for the 3'-end processing of cellular pre-mRNAs: the 30 kDa cleavage and polyadenylation specificity factor/CPSF4 and the poly(A)-binding protein 2/PABPN1. In turn, unprocessed 3' end pre-mRNAs accumulate in the host nucleus and are no longer exported to the cytoplasm. Cellular protein synthesis is thereby shut off very early after virus infection. Viral protein synthesis is not affected by the inhibition of the cellular 3' end processing machinery because the poly(A) tails of viral mRNAs are produced by the viral polymerase through a stuttering mechanism. Prevents the establishment of the cellular antiviral state by inhibiting TRIM25-mediated RIGI ubiquitination, which normally triggers the antiviral transduction signal that leads to the activation of type I IFN genes by transcription factors IRF3 and IRF7. Also binds poly(A) and U6 snRNA. Inhibits the integrated stress response (ISR) in the infected cell by blocking dsRNA binding by EIF2AK2/PKR and further phosphorylation of EIF2S1/EIF-2ALPHA. Stress granule formation is thus inhibited, which allows protein synthesis and viral replication.</text>
</comment>
<comment type="subunit">
    <text evidence="1">Homodimer. Interacts with host TRIM25 (via coiled coil); this interaction specifically inhibits TRIM25 multimerization and TRIM25-mediated RIGI CARD ubiquitination. Interacts with human EIF2AK2/PKR, CPSF4, IVNS1ABP and PABPN1.</text>
</comment>
<comment type="subcellular location">
    <subcellularLocation>
        <location evidence="1">Host nucleus</location>
    </subcellularLocation>
    <subcellularLocation>
        <location evidence="1">Host cytoplasm</location>
    </subcellularLocation>
    <text evidence="1">In uninfected, transfected cells, NS1 is localized in the nucleus. Only in virus infected cells, the nuclear export signal is unveiled, presumably by a viral protein, and a fraction of NS1 is exported in the cytoplasm.</text>
</comment>
<comment type="alternative products">
    <event type="alternative splicing"/>
    <isoform>
        <id>A4K149-1</id>
        <name>NS1</name>
        <sequence type="displayed"/>
    </isoform>
    <isoform>
        <id>A4K148-1</id>
        <name>NEP</name>
        <name>NS2</name>
        <sequence type="external"/>
    </isoform>
</comment>
<comment type="domain">
    <text evidence="1">The dsRNA-binding region is required for suppression of RNA silencing.</text>
</comment>
<comment type="PTM">
    <text evidence="1">Upon interferon induction, ISGylated via host HERC5; this results in the impairment of NS1 interaction with RNA targets due to its inability to form homodimers and to interact with host EIF2AK2/PKR.</text>
</comment>
<comment type="similarity">
    <text evidence="1">Belongs to the influenza A viruses NS1 family.</text>
</comment>
<organism>
    <name type="scientific">Influenza A virus (strain A/Malaysia:Malaya/302/1954 H1N1)</name>
    <dbReference type="NCBI Taxonomy" id="425566"/>
    <lineage>
        <taxon>Viruses</taxon>
        <taxon>Riboviria</taxon>
        <taxon>Orthornavirae</taxon>
        <taxon>Negarnaviricota</taxon>
        <taxon>Polyploviricotina</taxon>
        <taxon>Insthoviricetes</taxon>
        <taxon>Articulavirales</taxon>
        <taxon>Orthomyxoviridae</taxon>
        <taxon>Alphainfluenzavirus</taxon>
        <taxon>Alphainfluenzavirus influenzae</taxon>
        <taxon>Influenza A virus</taxon>
    </lineage>
</organism>
<keyword id="KW-0025">Alternative splicing</keyword>
<keyword id="KW-1262">Eukaryotic host gene expression shutoff by virus</keyword>
<keyword id="KW-1035">Host cytoplasm</keyword>
<keyword id="KW-1190">Host gene expression shutoff by virus</keyword>
<keyword id="KW-1192">Host mRNA suppression by virus</keyword>
<keyword id="KW-1048">Host nucleus</keyword>
<keyword id="KW-0945">Host-virus interaction</keyword>
<keyword id="KW-1090">Inhibition of host innate immune response by virus</keyword>
<keyword id="KW-1114">Inhibition of host interferon signaling pathway by virus</keyword>
<keyword id="KW-1102">Inhibition of host PKR by virus</keyword>
<keyword id="KW-1103">Inhibition of host pre-mRNA processing by virus</keyword>
<keyword id="KW-1088">Inhibition of host RIG-I by virus</keyword>
<keyword id="KW-1113">Inhibition of host RLR pathway by virus</keyword>
<keyword id="KW-0922">Interferon antiviral system evasion</keyword>
<keyword id="KW-0694">RNA-binding</keyword>
<keyword id="KW-0832">Ubl conjugation</keyword>
<keyword id="KW-0899">Viral immunoevasion</keyword>
<sequence length="237" mass="26943">MDPNTVSSFQVDCFLWHVRKQVADQELGDAPFLDRLRRDQKSLRGRGSTLGLNIETATRVGKQIVERILKEESDEALKMTMASAPASRYLTDMTIEEMSRDWFMLMPKQKVAGPLCIRMDQAIMDKNIILKANFSVIFDRLETLILLRAFTEEGAIVGEISPLPSLPGHTNEDVKNAIGVLIGGLEWNDNTVRVSKTLQRFAWRSSNENGRPPLTPKQKRKMARTIRSEVRRNKMAD</sequence>
<proteinExistence type="inferred from homology"/>
<protein>
    <recommendedName>
        <fullName evidence="1">Non-structural protein 1</fullName>
        <shortName evidence="1">NS1</shortName>
    </recommendedName>
    <alternativeName>
        <fullName evidence="1">NS1A</fullName>
    </alternativeName>
</protein>
<name>NS1_I54A2</name>
<accession>A4K149</accession>